<protein>
    <recommendedName>
        <fullName evidence="10">Solute carrier family 2, facilitated glucose transporter member 7</fullName>
    </recommendedName>
    <alternativeName>
        <fullName evidence="8">Glucose transporter type 7</fullName>
        <shortName evidence="8">GLUT-7</shortName>
        <shortName evidence="9">hGLUT7</shortName>
    </alternativeName>
</protein>
<keyword id="KW-0002">3D-structure</keyword>
<keyword id="KW-1003">Cell membrane</keyword>
<keyword id="KW-0325">Glycoprotein</keyword>
<keyword id="KW-0472">Membrane</keyword>
<keyword id="KW-1185">Reference proteome</keyword>
<keyword id="KW-0762">Sugar transport</keyword>
<keyword id="KW-0812">Transmembrane</keyword>
<keyword id="KW-1133">Transmembrane helix</keyword>
<keyword id="KW-0813">Transport</keyword>
<organism>
    <name type="scientific">Homo sapiens</name>
    <name type="common">Human</name>
    <dbReference type="NCBI Taxonomy" id="9606"/>
    <lineage>
        <taxon>Eukaryota</taxon>
        <taxon>Metazoa</taxon>
        <taxon>Chordata</taxon>
        <taxon>Craniata</taxon>
        <taxon>Vertebrata</taxon>
        <taxon>Euteleostomi</taxon>
        <taxon>Mammalia</taxon>
        <taxon>Eutheria</taxon>
        <taxon>Euarchontoglires</taxon>
        <taxon>Primates</taxon>
        <taxon>Haplorrhini</taxon>
        <taxon>Catarrhini</taxon>
        <taxon>Hominidae</taxon>
        <taxon>Homo</taxon>
    </lineage>
</organism>
<gene>
    <name evidence="8 11" type="primary">SLC2A7</name>
    <name evidence="8" type="synonym">GLUT7</name>
</gene>
<feature type="chain" id="PRO_0000317274" description="Solute carrier family 2, facilitated glucose transporter member 7">
    <location>
        <begin position="1"/>
        <end position="512"/>
    </location>
</feature>
<feature type="topological domain" description="Cytoplasmic" evidence="2">
    <location>
        <begin position="1"/>
        <end position="21"/>
    </location>
</feature>
<feature type="transmembrane region" description="Helical" evidence="2">
    <location>
        <begin position="22"/>
        <end position="42"/>
    </location>
</feature>
<feature type="topological domain" description="Extracellular" evidence="2">
    <location>
        <begin position="43"/>
        <end position="78"/>
    </location>
</feature>
<feature type="transmembrane region" description="Helical" evidence="2">
    <location>
        <begin position="79"/>
        <end position="99"/>
    </location>
</feature>
<feature type="topological domain" description="Cytoplasmic" evidence="2">
    <location>
        <begin position="100"/>
        <end position="107"/>
    </location>
</feature>
<feature type="transmembrane region" description="Helical" evidence="2">
    <location>
        <begin position="108"/>
        <end position="128"/>
    </location>
</feature>
<feature type="topological domain" description="Extracellular" evidence="2">
    <location>
        <begin position="129"/>
        <end position="138"/>
    </location>
</feature>
<feature type="transmembrane region" description="Helical" evidence="2">
    <location>
        <begin position="139"/>
        <end position="159"/>
    </location>
</feature>
<feature type="topological domain" description="Cytoplasmic" evidence="2">
    <location>
        <begin position="160"/>
        <end position="172"/>
    </location>
</feature>
<feature type="transmembrane region" description="Helical" evidence="2">
    <location>
        <begin position="173"/>
        <end position="193"/>
    </location>
</feature>
<feature type="topological domain" description="Extracellular" evidence="2">
    <location>
        <begin position="194"/>
        <end position="198"/>
    </location>
</feature>
<feature type="transmembrane region" description="Helical" evidence="2">
    <location>
        <begin position="199"/>
        <end position="219"/>
    </location>
</feature>
<feature type="topological domain" description="Cytoplasmic" evidence="2">
    <location>
        <begin position="220"/>
        <end position="281"/>
    </location>
</feature>
<feature type="transmembrane region" description="Helical" evidence="2">
    <location>
        <begin position="282"/>
        <end position="302"/>
    </location>
</feature>
<feature type="topological domain" description="Extracellular" evidence="2">
    <location>
        <begin position="303"/>
        <end position="321"/>
    </location>
</feature>
<feature type="transmembrane region" description="Helical" evidence="2">
    <location>
        <begin position="322"/>
        <end position="342"/>
    </location>
</feature>
<feature type="topological domain" description="Cytoplasmic" evidence="2">
    <location>
        <begin position="343"/>
        <end position="350"/>
    </location>
</feature>
<feature type="transmembrane region" description="Helical" evidence="2">
    <location>
        <begin position="351"/>
        <end position="371"/>
    </location>
</feature>
<feature type="topological domain" description="Extracellular" evidence="2">
    <location>
        <begin position="372"/>
        <end position="379"/>
    </location>
</feature>
<feature type="transmembrane region" description="Helical" evidence="2">
    <location>
        <begin position="380"/>
        <end position="400"/>
    </location>
</feature>
<feature type="topological domain" description="Cytoplasmic" evidence="2">
    <location>
        <begin position="401"/>
        <end position="415"/>
    </location>
</feature>
<feature type="transmembrane region" description="Helical" evidence="2">
    <location>
        <begin position="416"/>
        <end position="436"/>
    </location>
</feature>
<feature type="topological domain" description="Extracellular" evidence="2">
    <location>
        <begin position="437"/>
        <end position="445"/>
    </location>
</feature>
<feature type="transmembrane region" description="Helical" evidence="2">
    <location>
        <begin position="446"/>
        <end position="466"/>
    </location>
</feature>
<feature type="topological domain" description="Cytoplasmic" evidence="2">
    <location>
        <begin position="467"/>
        <end position="512"/>
    </location>
</feature>
<feature type="region of interest" description="Disordered" evidence="3">
    <location>
        <begin position="491"/>
        <end position="512"/>
    </location>
</feature>
<feature type="binding site" evidence="1">
    <location>
        <begin position="294"/>
        <end position="295"/>
    </location>
    <ligand>
        <name>D-glucose</name>
        <dbReference type="ChEBI" id="CHEBI:4167"/>
    </ligand>
</feature>
<feature type="binding site" evidence="1">
    <location>
        <position position="300"/>
    </location>
    <ligand>
        <name>D-glucose</name>
        <dbReference type="ChEBI" id="CHEBI:4167"/>
    </ligand>
</feature>
<feature type="binding site" evidence="1">
    <location>
        <position position="331"/>
    </location>
    <ligand>
        <name>D-glucose</name>
        <dbReference type="ChEBI" id="CHEBI:4167"/>
    </ligand>
</feature>
<feature type="glycosylation site" description="N-linked (GlcNAc...) asparagine" evidence="2">
    <location>
        <position position="57"/>
    </location>
</feature>
<feature type="sequence variant" id="VAR_052504" description="In dbSNP:rs34545462.">
    <original>V</original>
    <variation>I</variation>
    <location>
        <position position="135"/>
    </location>
</feature>
<feature type="sequence variant" id="VAR_061879" description="In dbSNP:rs12402973.">
    <original>R</original>
    <variation>Q</variation>
    <location>
        <position position="261"/>
    </location>
</feature>
<feature type="mutagenesis site" description="Does not affect glucose or fructose transport." evidence="5">
    <original>I</original>
    <variation>S</variation>
    <location>
        <position position="302"/>
    </location>
</feature>
<feature type="mutagenesis site" description="Abolished fructose transport." evidence="5">
    <original>I</original>
    <variation>V</variation>
    <location>
        <position position="302"/>
    </location>
</feature>
<feature type="helix" evidence="12">
    <location>
        <begin position="21"/>
        <end position="42"/>
    </location>
</feature>
<feature type="strand" evidence="12">
    <location>
        <begin position="43"/>
        <end position="46"/>
    </location>
</feature>
<feature type="helix" evidence="12">
    <location>
        <begin position="49"/>
        <end position="64"/>
    </location>
</feature>
<feature type="helix" evidence="12">
    <location>
        <begin position="70"/>
        <end position="92"/>
    </location>
</feature>
<feature type="helix" evidence="12">
    <location>
        <begin position="95"/>
        <end position="111"/>
    </location>
</feature>
<feature type="helix" evidence="12">
    <location>
        <begin position="113"/>
        <end position="123"/>
    </location>
</feature>
<feature type="turn" evidence="12">
    <location>
        <begin position="124"/>
        <end position="129"/>
    </location>
</feature>
<feature type="helix" evidence="12">
    <location>
        <begin position="132"/>
        <end position="159"/>
    </location>
</feature>
<feature type="helix" evidence="12">
    <location>
        <begin position="162"/>
        <end position="164"/>
    </location>
</feature>
<feature type="helix" evidence="12">
    <location>
        <begin position="165"/>
        <end position="186"/>
    </location>
</feature>
<feature type="turn" evidence="12">
    <location>
        <begin position="189"/>
        <end position="192"/>
    </location>
</feature>
<feature type="turn" evidence="12">
    <location>
        <begin position="195"/>
        <end position="197"/>
    </location>
</feature>
<feature type="helix" evidence="12">
    <location>
        <begin position="198"/>
        <end position="203"/>
    </location>
</feature>
<feature type="helix" evidence="12">
    <location>
        <begin position="204"/>
        <end position="206"/>
    </location>
</feature>
<feature type="helix" evidence="12">
    <location>
        <begin position="207"/>
        <end position="215"/>
    </location>
</feature>
<feature type="helix" evidence="12">
    <location>
        <begin position="216"/>
        <end position="218"/>
    </location>
</feature>
<feature type="helix" evidence="12">
    <location>
        <begin position="223"/>
        <end position="228"/>
    </location>
</feature>
<feature type="helix" evidence="12">
    <location>
        <begin position="233"/>
        <end position="243"/>
    </location>
</feature>
<feature type="helix" evidence="12">
    <location>
        <begin position="250"/>
        <end position="266"/>
    </location>
</feature>
<feature type="turn" evidence="12">
    <location>
        <begin position="272"/>
        <end position="276"/>
    </location>
</feature>
<feature type="helix" evidence="12">
    <location>
        <begin position="278"/>
        <end position="280"/>
    </location>
</feature>
<feature type="helix" evidence="12">
    <location>
        <begin position="281"/>
        <end position="295"/>
    </location>
</feature>
<feature type="strand" evidence="12">
    <location>
        <begin position="296"/>
        <end position="298"/>
    </location>
</feature>
<feature type="helix" evidence="12">
    <location>
        <begin position="299"/>
        <end position="312"/>
    </location>
</feature>
<feature type="helix" evidence="12">
    <location>
        <begin position="320"/>
        <end position="345"/>
    </location>
</feature>
<feature type="helix" evidence="12">
    <location>
        <begin position="347"/>
        <end position="370"/>
    </location>
</feature>
<feature type="turn" evidence="12">
    <location>
        <begin position="371"/>
        <end position="374"/>
    </location>
</feature>
<feature type="helix" evidence="12">
    <location>
        <begin position="376"/>
        <end position="378"/>
    </location>
</feature>
<feature type="helix" evidence="12">
    <location>
        <begin position="379"/>
        <end position="395"/>
    </location>
</feature>
<feature type="turn" evidence="12">
    <location>
        <begin position="396"/>
        <end position="398"/>
    </location>
</feature>
<feature type="helix" evidence="12">
    <location>
        <begin position="399"/>
        <end position="407"/>
    </location>
</feature>
<feature type="helix" evidence="12">
    <location>
        <begin position="414"/>
        <end position="433"/>
    </location>
</feature>
<feature type="helix" evidence="12">
    <location>
        <begin position="436"/>
        <end position="443"/>
    </location>
</feature>
<feature type="helix" evidence="12">
    <location>
        <begin position="447"/>
        <end position="464"/>
    </location>
</feature>
<feature type="helix" evidence="12">
    <location>
        <begin position="474"/>
        <end position="484"/>
    </location>
</feature>
<reference key="1">
    <citation type="journal article" date="2004" name="Am. J. Physiol.">
        <title>Cloning and functional characterization of the human GLUT7 isoform SLC2A7 from the small intestine.</title>
        <authorList>
            <person name="Li Q."/>
            <person name="Manolescu A.R."/>
            <person name="Ritzel M."/>
            <person name="Yao S."/>
            <person name="Slugoski M."/>
            <person name="Young J.D."/>
            <person name="Chen X.-Z."/>
            <person name="Cheeseman C.I."/>
        </authorList>
    </citation>
    <scope>NUCLEOTIDE SEQUENCE [MRNA]</scope>
    <scope>FUNCTION</scope>
    <scope>BIOPHYSICOCHEMICAL PROPERTIES</scope>
    <scope>TISSUE SPECIFICITY</scope>
</reference>
<reference key="2">
    <citation type="journal article" date="2006" name="Nature">
        <title>The DNA sequence and biological annotation of human chromosome 1.</title>
        <authorList>
            <person name="Gregory S.G."/>
            <person name="Barlow K.F."/>
            <person name="McLay K.E."/>
            <person name="Kaul R."/>
            <person name="Swarbreck D."/>
            <person name="Dunham A."/>
            <person name="Scott C.E."/>
            <person name="Howe K.L."/>
            <person name="Woodfine K."/>
            <person name="Spencer C.C.A."/>
            <person name="Jones M.C."/>
            <person name="Gillson C."/>
            <person name="Searle S."/>
            <person name="Zhou Y."/>
            <person name="Kokocinski F."/>
            <person name="McDonald L."/>
            <person name="Evans R."/>
            <person name="Phillips K."/>
            <person name="Atkinson A."/>
            <person name="Cooper R."/>
            <person name="Jones C."/>
            <person name="Hall R.E."/>
            <person name="Andrews T.D."/>
            <person name="Lloyd C."/>
            <person name="Ainscough R."/>
            <person name="Almeida J.P."/>
            <person name="Ambrose K.D."/>
            <person name="Anderson F."/>
            <person name="Andrew R.W."/>
            <person name="Ashwell R.I.S."/>
            <person name="Aubin K."/>
            <person name="Babbage A.K."/>
            <person name="Bagguley C.L."/>
            <person name="Bailey J."/>
            <person name="Beasley H."/>
            <person name="Bethel G."/>
            <person name="Bird C.P."/>
            <person name="Bray-Allen S."/>
            <person name="Brown J.Y."/>
            <person name="Brown A.J."/>
            <person name="Buckley D."/>
            <person name="Burton J."/>
            <person name="Bye J."/>
            <person name="Carder C."/>
            <person name="Chapman J.C."/>
            <person name="Clark S.Y."/>
            <person name="Clarke G."/>
            <person name="Clee C."/>
            <person name="Cobley V."/>
            <person name="Collier R.E."/>
            <person name="Corby N."/>
            <person name="Coville G.J."/>
            <person name="Davies J."/>
            <person name="Deadman R."/>
            <person name="Dunn M."/>
            <person name="Earthrowl M."/>
            <person name="Ellington A.G."/>
            <person name="Errington H."/>
            <person name="Frankish A."/>
            <person name="Frankland J."/>
            <person name="French L."/>
            <person name="Garner P."/>
            <person name="Garnett J."/>
            <person name="Gay L."/>
            <person name="Ghori M.R.J."/>
            <person name="Gibson R."/>
            <person name="Gilby L.M."/>
            <person name="Gillett W."/>
            <person name="Glithero R.J."/>
            <person name="Grafham D.V."/>
            <person name="Griffiths C."/>
            <person name="Griffiths-Jones S."/>
            <person name="Grocock R."/>
            <person name="Hammond S."/>
            <person name="Harrison E.S.I."/>
            <person name="Hart E."/>
            <person name="Haugen E."/>
            <person name="Heath P.D."/>
            <person name="Holmes S."/>
            <person name="Holt K."/>
            <person name="Howden P.J."/>
            <person name="Hunt A.R."/>
            <person name="Hunt S.E."/>
            <person name="Hunter G."/>
            <person name="Isherwood J."/>
            <person name="James R."/>
            <person name="Johnson C."/>
            <person name="Johnson D."/>
            <person name="Joy A."/>
            <person name="Kay M."/>
            <person name="Kershaw J.K."/>
            <person name="Kibukawa M."/>
            <person name="Kimberley A.M."/>
            <person name="King A."/>
            <person name="Knights A.J."/>
            <person name="Lad H."/>
            <person name="Laird G."/>
            <person name="Lawlor S."/>
            <person name="Leongamornlert D.A."/>
            <person name="Lloyd D.M."/>
            <person name="Loveland J."/>
            <person name="Lovell J."/>
            <person name="Lush M.J."/>
            <person name="Lyne R."/>
            <person name="Martin S."/>
            <person name="Mashreghi-Mohammadi M."/>
            <person name="Matthews L."/>
            <person name="Matthews N.S.W."/>
            <person name="McLaren S."/>
            <person name="Milne S."/>
            <person name="Mistry S."/>
            <person name="Moore M.J.F."/>
            <person name="Nickerson T."/>
            <person name="O'Dell C.N."/>
            <person name="Oliver K."/>
            <person name="Palmeiri A."/>
            <person name="Palmer S.A."/>
            <person name="Parker A."/>
            <person name="Patel D."/>
            <person name="Pearce A.V."/>
            <person name="Peck A.I."/>
            <person name="Pelan S."/>
            <person name="Phelps K."/>
            <person name="Phillimore B.J."/>
            <person name="Plumb R."/>
            <person name="Rajan J."/>
            <person name="Raymond C."/>
            <person name="Rouse G."/>
            <person name="Saenphimmachak C."/>
            <person name="Sehra H.K."/>
            <person name="Sheridan E."/>
            <person name="Shownkeen R."/>
            <person name="Sims S."/>
            <person name="Skuce C.D."/>
            <person name="Smith M."/>
            <person name="Steward C."/>
            <person name="Subramanian S."/>
            <person name="Sycamore N."/>
            <person name="Tracey A."/>
            <person name="Tromans A."/>
            <person name="Van Helmond Z."/>
            <person name="Wall M."/>
            <person name="Wallis J.M."/>
            <person name="White S."/>
            <person name="Whitehead S.L."/>
            <person name="Wilkinson J.E."/>
            <person name="Willey D.L."/>
            <person name="Williams H."/>
            <person name="Wilming L."/>
            <person name="Wray P.W."/>
            <person name="Wu Z."/>
            <person name="Coulson A."/>
            <person name="Vaudin M."/>
            <person name="Sulston J.E."/>
            <person name="Durbin R.M."/>
            <person name="Hubbard T."/>
            <person name="Wooster R."/>
            <person name="Dunham I."/>
            <person name="Carter N.P."/>
            <person name="McVean G."/>
            <person name="Ross M.T."/>
            <person name="Harrow J."/>
            <person name="Olson M.V."/>
            <person name="Beck S."/>
            <person name="Rogers J."/>
            <person name="Bentley D.R."/>
        </authorList>
    </citation>
    <scope>NUCLEOTIDE SEQUENCE [LARGE SCALE GENOMIC DNA]</scope>
</reference>
<reference key="3">
    <citation type="submission" date="2005-07" db="EMBL/GenBank/DDBJ databases">
        <authorList>
            <person name="Mural R.J."/>
            <person name="Istrail S."/>
            <person name="Sutton G.G."/>
            <person name="Florea L."/>
            <person name="Halpern A.L."/>
            <person name="Mobarry C.M."/>
            <person name="Lippert R."/>
            <person name="Walenz B."/>
            <person name="Shatkay H."/>
            <person name="Dew I."/>
            <person name="Miller J.R."/>
            <person name="Flanigan M.J."/>
            <person name="Edwards N.J."/>
            <person name="Bolanos R."/>
            <person name="Fasulo D."/>
            <person name="Halldorsson B.V."/>
            <person name="Hannenhalli S."/>
            <person name="Turner R."/>
            <person name="Yooseph S."/>
            <person name="Lu F."/>
            <person name="Nusskern D.R."/>
            <person name="Shue B.C."/>
            <person name="Zheng X.H."/>
            <person name="Zhong F."/>
            <person name="Delcher A.L."/>
            <person name="Huson D.H."/>
            <person name="Kravitz S.A."/>
            <person name="Mouchard L."/>
            <person name="Reinert K."/>
            <person name="Remington K.A."/>
            <person name="Clark A.G."/>
            <person name="Waterman M.S."/>
            <person name="Eichler E.E."/>
            <person name="Adams M.D."/>
            <person name="Hunkapiller M.W."/>
            <person name="Myers E.W."/>
            <person name="Venter J.C."/>
        </authorList>
    </citation>
    <scope>NUCLEOTIDE SEQUENCE [LARGE SCALE GENOMIC DNA]</scope>
</reference>
<reference key="4">
    <citation type="journal article" date="2005" name="J. Biol. Chem.">
        <title>Identification of a hydrophobic residue as a key determinant of fructose transport by the facilitative hexose transporter SLC2A7 (GLUT7).</title>
        <authorList>
            <person name="Manolescu A."/>
            <person name="Salas-Burgos A.M."/>
            <person name="Fischbarg J."/>
            <person name="Cheeseman C.I."/>
        </authorList>
    </citation>
    <scope>FUNCTION</scope>
    <scope>SUBCELLULAR LOCATION</scope>
    <scope>MUTAGENESIS OF ILE-302</scope>
</reference>
<reference key="5">
    <citation type="journal article" date="2017" name="J. Membr. Biol.">
        <title>Reassessment of GLUT7 and GLUT9 as putative fructose and glucose transporters.</title>
        <authorList>
            <person name="Ebert K."/>
            <person name="Ludwig M."/>
            <person name="Geillinger K.E."/>
            <person name="Schoberth G.C."/>
            <person name="Essenwanger J."/>
            <person name="Stolz J."/>
            <person name="Daniel H."/>
            <person name="Witt H."/>
        </authorList>
    </citation>
    <scope>FUNCTION</scope>
    <scope>SUBCELLULAR LOCATION</scope>
</reference>
<reference key="6">
    <citation type="journal article" date="2018" name="Biochem. Pharmacol.">
        <title>Differential patterns of inhibition of the sugar transporters GLUT2, GLUT5 and GLUT7 by flavonoids.</title>
        <authorList>
            <person name="Gauer J.S."/>
            <person name="Tumova S."/>
            <person name="Lippiat J.D."/>
            <person name="Kerimi A."/>
            <person name="Williamson G."/>
        </authorList>
    </citation>
    <scope>SUBCELLULAR LOCATION</scope>
    <scope>FUNCTION</scope>
    <scope>ACTIVITY REGULATION</scope>
    <scope>INDUCTION BY FRUCTOSE</scope>
</reference>
<dbReference type="EMBL" id="AY571960">
    <property type="protein sequence ID" value="AAS78590.2"/>
    <property type="molecule type" value="mRNA"/>
</dbReference>
<dbReference type="EMBL" id="AL158048">
    <property type="status" value="NOT_ANNOTATED_CDS"/>
    <property type="molecule type" value="Genomic_DNA"/>
</dbReference>
<dbReference type="EMBL" id="CH471130">
    <property type="protein sequence ID" value="EAW71607.1"/>
    <property type="molecule type" value="Genomic_DNA"/>
</dbReference>
<dbReference type="CCDS" id="CCDS98.2"/>
<dbReference type="RefSeq" id="NP_997303.2">
    <property type="nucleotide sequence ID" value="NM_207420.3"/>
</dbReference>
<dbReference type="PDB" id="9J2N">
    <property type="method" value="EM"/>
    <property type="resolution" value="3.30 A"/>
    <property type="chains" value="A=1-512"/>
</dbReference>
<dbReference type="PDBsum" id="9J2N"/>
<dbReference type="EMDB" id="EMD-61099"/>
<dbReference type="SMR" id="Q6PXP3"/>
<dbReference type="BioGRID" id="127578">
    <property type="interactions" value="23"/>
</dbReference>
<dbReference type="FunCoup" id="Q6PXP3">
    <property type="interactions" value="61"/>
</dbReference>
<dbReference type="IntAct" id="Q6PXP3">
    <property type="interactions" value="6"/>
</dbReference>
<dbReference type="STRING" id="9606.ENSP00000383698"/>
<dbReference type="DrugBank" id="DB01914">
    <property type="generic name" value="D-glucose"/>
</dbReference>
<dbReference type="DrugBank" id="DB09341">
    <property type="generic name" value="Dextrose, unspecified form"/>
</dbReference>
<dbReference type="DrugBank" id="DB09502">
    <property type="generic name" value="Fludeoxyglucose (18F)"/>
</dbReference>
<dbReference type="TCDB" id="2.A.1.1.37">
    <property type="family name" value="the major facilitator superfamily (mfs)"/>
</dbReference>
<dbReference type="GlyCosmos" id="Q6PXP3">
    <property type="glycosylation" value="1 site, No reported glycans"/>
</dbReference>
<dbReference type="GlyGen" id="Q6PXP3">
    <property type="glycosylation" value="2 sites"/>
</dbReference>
<dbReference type="iPTMnet" id="Q6PXP3"/>
<dbReference type="BioMuta" id="SLC2A7"/>
<dbReference type="DMDM" id="167008866"/>
<dbReference type="jPOST" id="Q6PXP3"/>
<dbReference type="MassIVE" id="Q6PXP3"/>
<dbReference type="PaxDb" id="9606-ENSP00000383698"/>
<dbReference type="PeptideAtlas" id="Q6PXP3"/>
<dbReference type="ProteomicsDB" id="67261"/>
<dbReference type="Antibodypedia" id="49274">
    <property type="antibodies" value="17 antibodies from 9 providers"/>
</dbReference>
<dbReference type="DNASU" id="155184"/>
<dbReference type="Ensembl" id="ENST00000400906.2">
    <property type="protein sequence ID" value="ENSP00000383698.1"/>
    <property type="gene ID" value="ENSG00000197241.4"/>
</dbReference>
<dbReference type="GeneID" id="155184"/>
<dbReference type="KEGG" id="hsa:155184"/>
<dbReference type="MANE-Select" id="ENST00000400906.2">
    <property type="protein sequence ID" value="ENSP00000383698.1"/>
    <property type="RefSeq nucleotide sequence ID" value="NM_207420.3"/>
    <property type="RefSeq protein sequence ID" value="NP_997303.2"/>
</dbReference>
<dbReference type="UCSC" id="uc009vmo.1">
    <property type="organism name" value="human"/>
</dbReference>
<dbReference type="AGR" id="HGNC:13445"/>
<dbReference type="CTD" id="155184"/>
<dbReference type="DisGeNET" id="155184"/>
<dbReference type="GeneCards" id="SLC2A7"/>
<dbReference type="HGNC" id="HGNC:13445">
    <property type="gene designation" value="SLC2A7"/>
</dbReference>
<dbReference type="HPA" id="ENSG00000197241">
    <property type="expression patterns" value="Tissue enriched (intestine)"/>
</dbReference>
<dbReference type="MIM" id="610371">
    <property type="type" value="gene"/>
</dbReference>
<dbReference type="neXtProt" id="NX_Q6PXP3"/>
<dbReference type="PharmGKB" id="PA37770"/>
<dbReference type="VEuPathDB" id="HostDB:ENSG00000197241"/>
<dbReference type="eggNOG" id="KOG0569">
    <property type="taxonomic scope" value="Eukaryota"/>
</dbReference>
<dbReference type="GeneTree" id="ENSGT00940000162742"/>
<dbReference type="HOGENOM" id="CLU_001265_30_11_1"/>
<dbReference type="InParanoid" id="Q6PXP3"/>
<dbReference type="OMA" id="TEVFVII"/>
<dbReference type="OrthoDB" id="4540492at2759"/>
<dbReference type="PAN-GO" id="Q6PXP3">
    <property type="GO annotations" value="4 GO annotations based on evolutionary models"/>
</dbReference>
<dbReference type="PhylomeDB" id="Q6PXP3"/>
<dbReference type="TreeFam" id="TF313762"/>
<dbReference type="PathwayCommons" id="Q6PXP3"/>
<dbReference type="Reactome" id="R-HSA-189200">
    <property type="pathway name" value="Cellular hexose transport"/>
</dbReference>
<dbReference type="BioGRID-ORCS" id="155184">
    <property type="hits" value="11 hits in 1137 CRISPR screens"/>
</dbReference>
<dbReference type="ChiTaRS" id="SLC2A7">
    <property type="organism name" value="human"/>
</dbReference>
<dbReference type="GeneWiki" id="SLC2A7"/>
<dbReference type="GenomeRNAi" id="155184"/>
<dbReference type="Pharos" id="Q6PXP3">
    <property type="development level" value="Tdark"/>
</dbReference>
<dbReference type="PRO" id="PR:Q6PXP3"/>
<dbReference type="Proteomes" id="UP000005640">
    <property type="component" value="Chromosome 1"/>
</dbReference>
<dbReference type="RNAct" id="Q6PXP3">
    <property type="molecule type" value="protein"/>
</dbReference>
<dbReference type="Bgee" id="ENSG00000197241">
    <property type="expression patterns" value="Expressed in duodenum and 3 other cell types or tissues"/>
</dbReference>
<dbReference type="GO" id="GO:0016324">
    <property type="term" value="C:apical plasma membrane"/>
    <property type="evidence" value="ECO:0007669"/>
    <property type="project" value="UniProtKB-SubCell"/>
</dbReference>
<dbReference type="GO" id="GO:0005886">
    <property type="term" value="C:plasma membrane"/>
    <property type="evidence" value="ECO:0000314"/>
    <property type="project" value="UniProtKB"/>
</dbReference>
<dbReference type="GO" id="GO:0055056">
    <property type="term" value="F:D-glucose transmembrane transporter activity"/>
    <property type="evidence" value="ECO:0000314"/>
    <property type="project" value="UniProtKB"/>
</dbReference>
<dbReference type="GO" id="GO:0005353">
    <property type="term" value="F:fructose transmembrane transporter activity"/>
    <property type="evidence" value="ECO:0000314"/>
    <property type="project" value="UniProtKB"/>
</dbReference>
<dbReference type="GO" id="GO:0051119">
    <property type="term" value="F:sugar transmembrane transporter activity"/>
    <property type="evidence" value="ECO:0000304"/>
    <property type="project" value="Reactome"/>
</dbReference>
<dbReference type="GO" id="GO:0046323">
    <property type="term" value="P:D-glucose import"/>
    <property type="evidence" value="ECO:0000318"/>
    <property type="project" value="GO_Central"/>
</dbReference>
<dbReference type="GO" id="GO:1904659">
    <property type="term" value="P:D-glucose transmembrane transport"/>
    <property type="evidence" value="ECO:0000314"/>
    <property type="project" value="UniProtKB"/>
</dbReference>
<dbReference type="GO" id="GO:0070837">
    <property type="term" value="P:dehydroascorbic acid transport"/>
    <property type="evidence" value="ECO:0000318"/>
    <property type="project" value="GO_Central"/>
</dbReference>
<dbReference type="GO" id="GO:0015755">
    <property type="term" value="P:fructose transmembrane transport"/>
    <property type="evidence" value="ECO:0000314"/>
    <property type="project" value="UniProtKB"/>
</dbReference>
<dbReference type="GO" id="GO:0008645">
    <property type="term" value="P:hexose transmembrane transport"/>
    <property type="evidence" value="ECO:0000304"/>
    <property type="project" value="Reactome"/>
</dbReference>
<dbReference type="CDD" id="cd17432">
    <property type="entry name" value="MFS_GLUT_Class2"/>
    <property type="match status" value="1"/>
</dbReference>
<dbReference type="FunFam" id="1.20.1250.20:FF:000029">
    <property type="entry name" value="solute carrier family 2, facilitated glucose transporter member 4"/>
    <property type="match status" value="1"/>
</dbReference>
<dbReference type="Gene3D" id="1.20.1250.20">
    <property type="entry name" value="MFS general substrate transporter like domains"/>
    <property type="match status" value="1"/>
</dbReference>
<dbReference type="InterPro" id="IPR045263">
    <property type="entry name" value="GLUT"/>
</dbReference>
<dbReference type="InterPro" id="IPR020846">
    <property type="entry name" value="MFS_dom"/>
</dbReference>
<dbReference type="InterPro" id="IPR005828">
    <property type="entry name" value="MFS_sugar_transport-like"/>
</dbReference>
<dbReference type="InterPro" id="IPR036259">
    <property type="entry name" value="MFS_trans_sf"/>
</dbReference>
<dbReference type="InterPro" id="IPR003663">
    <property type="entry name" value="Sugar/inositol_transpt"/>
</dbReference>
<dbReference type="InterPro" id="IPR005829">
    <property type="entry name" value="Sugar_transporter_CS"/>
</dbReference>
<dbReference type="NCBIfam" id="TIGR00879">
    <property type="entry name" value="SP"/>
    <property type="match status" value="1"/>
</dbReference>
<dbReference type="PANTHER" id="PTHR23503">
    <property type="entry name" value="SOLUTE CARRIER FAMILY 2"/>
    <property type="match status" value="1"/>
</dbReference>
<dbReference type="PANTHER" id="PTHR23503:SF30">
    <property type="entry name" value="SOLUTE CARRIER FAMILY 2, FACILITATED GLUCOSE TRANSPORTER MEMBER 7"/>
    <property type="match status" value="1"/>
</dbReference>
<dbReference type="Pfam" id="PF00083">
    <property type="entry name" value="Sugar_tr"/>
    <property type="match status" value="1"/>
</dbReference>
<dbReference type="PRINTS" id="PR00171">
    <property type="entry name" value="SUGRTRNSPORT"/>
</dbReference>
<dbReference type="SUPFAM" id="SSF103473">
    <property type="entry name" value="MFS general substrate transporter"/>
    <property type="match status" value="1"/>
</dbReference>
<dbReference type="PROSITE" id="PS50850">
    <property type="entry name" value="MFS"/>
    <property type="match status" value="1"/>
</dbReference>
<dbReference type="PROSITE" id="PS00216">
    <property type="entry name" value="SUGAR_TRANSPORT_1"/>
    <property type="match status" value="1"/>
</dbReference>
<dbReference type="PROSITE" id="PS00217">
    <property type="entry name" value="SUGAR_TRANSPORT_2"/>
    <property type="match status" value="1"/>
</dbReference>
<sequence>MENKEAGTPPPIPSREGRLQPTLLLATLSAAFGSAFQYGYNLSVVNTPHKVFKSFYNETYFERHATFMDGKLMLLLWSCTVSMFPLGGLLGSLLVGLLVDSCGRKGTLLINNIFAIIPAILMGVSKVAKAFELIVFSRVVLGVCAGISYSALPMYLGELAPKNLRGMVGTMTEVFVIVGVFLAQIFSLQAILGNPAGWPVLLALTGVPALLQLLTLPFFPESPRYSLIQKGDEATARQALRRLRGHTDMEAELEDMRAEARAERAEGHLSVLHLCALRSLRWQLLSIIVLMAGQQLSGINAINYYADTIYTSAGVEAAHSQYVTVGSGVVNIVMTITSAVLVERLGRRHLLLAGYGICGSACLVLTVVLLFQNRVPELSYLGIICVFAYIAGHSIGPSPVPSVVRTEIFLQSSRRAAFMVDGAVHWLTNFIIGFLFPSIQEAIGAYSFIIFAGICLLTAIYIYVVIPETKGKTFVEINRIFAKRNRVKLPEEKEETIDAGPPTASPAKETSF</sequence>
<evidence type="ECO:0000250" key="1">
    <source>
        <dbReference type="UniProtKB" id="P11169"/>
    </source>
</evidence>
<evidence type="ECO:0000255" key="2"/>
<evidence type="ECO:0000256" key="3">
    <source>
        <dbReference type="SAM" id="MobiDB-lite"/>
    </source>
</evidence>
<evidence type="ECO:0000269" key="4">
    <source>
    </source>
</evidence>
<evidence type="ECO:0000269" key="5">
    <source>
    </source>
</evidence>
<evidence type="ECO:0000269" key="6">
    <source>
    </source>
</evidence>
<evidence type="ECO:0000269" key="7">
    <source>
    </source>
</evidence>
<evidence type="ECO:0000303" key="8">
    <source>
    </source>
</evidence>
<evidence type="ECO:0000303" key="9">
    <source>
    </source>
</evidence>
<evidence type="ECO:0000305" key="10"/>
<evidence type="ECO:0000312" key="11">
    <source>
        <dbReference type="HGNC" id="HGNC:13445"/>
    </source>
</evidence>
<evidence type="ECO:0007829" key="12">
    <source>
        <dbReference type="PDB" id="9J2N"/>
    </source>
</evidence>
<proteinExistence type="evidence at protein level"/>
<accession>Q6PXP3</accession>
<accession>A2A333</accession>
<comment type="function">
    <text evidence="4 5 6 7">Probable sugar transporter (PubMed:28083649). Even if its physiological substrate is subject to discussion, it is able to transport glucose and fructose (PubMed:16186102, PubMed:28083649, PubMed:29548810). Does not transport galactose, 2-deoxy-d-glucose and xylose (PubMed:15033637).</text>
</comment>
<comment type="catalytic activity">
    <reaction evidence="5 7">
        <text>D-glucose(out) = D-glucose(in)</text>
        <dbReference type="Rhea" id="RHEA:60376"/>
        <dbReference type="ChEBI" id="CHEBI:4167"/>
    </reaction>
</comment>
<comment type="catalytic activity">
    <reaction evidence="5 7">
        <text>D-fructose(out) = D-fructose(in)</text>
        <dbReference type="Rhea" id="RHEA:60372"/>
        <dbReference type="ChEBI" id="CHEBI:37721"/>
    </reaction>
</comment>
<comment type="activity regulation">
    <text evidence="7">Glucose and fructose transport are inhibited by the flavonoid apigenin.</text>
</comment>
<comment type="biophysicochemical properties">
    <kinetics>
        <KM evidence="4">300 uM for glucose</KM>
    </kinetics>
</comment>
<comment type="subcellular location">
    <subcellularLocation>
        <location evidence="5 6">Cell membrane</location>
        <topology evidence="2">Multi-pass membrane protein</topology>
    </subcellularLocation>
    <subcellularLocation>
        <location evidence="7">Apical cell membrane</location>
        <topology evidence="2">Multi-pass membrane protein</topology>
    </subcellularLocation>
</comment>
<comment type="tissue specificity">
    <text evidence="4">Expressed in small intestine and colon (PubMed:15033637). Weakly expressed in testis and prostate (PubMed:15033637).</text>
</comment>
<comment type="induction">
    <text evidence="7">Expression is increased in presence of fructose.</text>
</comment>
<comment type="similarity">
    <text evidence="10">Belongs to the major facilitator superfamily. Sugar transporter (TC 2.A.1.1) family. Glucose transporter subfamily.</text>
</comment>
<comment type="caution">
    <text evidence="4 5 6 7">According to some reports, mediates transmembrane transport of glucose and fructose (PubMed:15033637, PubMed:16186102, PubMed:29548810). However, another group could not confirm transporter activity for glucose or fructose (PubMed:28083649).</text>
</comment>
<name>GTR7_HUMAN</name>